<keyword id="KW-0560">Oxidoreductase</keyword>
<keyword id="KW-0670">Pyruvate</keyword>
<keyword id="KW-0786">Thiamine pyrophosphate</keyword>
<comment type="function">
    <text evidence="1">The pyruvate dehydrogenase complex catalyzes the overall conversion of pyruvate to acetyl-CoA and CO(2). It contains multiple copies of three enzymatic components: pyruvate dehydrogenase (E1), dihydrolipoamide acetyltransferase (E2) and lipoamide dehydrogenase (E3) (By similarity).</text>
</comment>
<comment type="catalytic activity">
    <reaction>
        <text>N(6)-[(R)-lipoyl]-L-lysyl-[protein] + pyruvate + H(+) = N(6)-[(R)-S(8)-acetyldihydrolipoyl]-L-lysyl-[protein] + CO2</text>
        <dbReference type="Rhea" id="RHEA:19189"/>
        <dbReference type="Rhea" id="RHEA-COMP:10474"/>
        <dbReference type="Rhea" id="RHEA-COMP:10478"/>
        <dbReference type="ChEBI" id="CHEBI:15361"/>
        <dbReference type="ChEBI" id="CHEBI:15378"/>
        <dbReference type="ChEBI" id="CHEBI:16526"/>
        <dbReference type="ChEBI" id="CHEBI:83099"/>
        <dbReference type="ChEBI" id="CHEBI:83111"/>
        <dbReference type="EC" id="1.2.4.1"/>
    </reaction>
</comment>
<comment type="cofactor">
    <cofactor evidence="1">
        <name>thiamine diphosphate</name>
        <dbReference type="ChEBI" id="CHEBI:58937"/>
    </cofactor>
</comment>
<comment type="subunit">
    <text>Heterodimer of an alpha and a beta chain.</text>
</comment>
<gene>
    <name type="primary">pdhB</name>
    <name type="ordered locus">SAR1068</name>
</gene>
<accession>Q6GHZ1</accession>
<dbReference type="EC" id="1.2.4.1"/>
<dbReference type="EMBL" id="BX571856">
    <property type="protein sequence ID" value="CAG40070.1"/>
    <property type="molecule type" value="Genomic_DNA"/>
</dbReference>
<dbReference type="RefSeq" id="WP_000068176.1">
    <property type="nucleotide sequence ID" value="NC_002952.2"/>
</dbReference>
<dbReference type="SMR" id="Q6GHZ1"/>
<dbReference type="KEGG" id="sar:SAR1068"/>
<dbReference type="HOGENOM" id="CLU_012907_1_0_9"/>
<dbReference type="Proteomes" id="UP000000596">
    <property type="component" value="Chromosome"/>
</dbReference>
<dbReference type="GO" id="GO:0004739">
    <property type="term" value="F:pyruvate dehydrogenase (acetyl-transferring) activity"/>
    <property type="evidence" value="ECO:0007669"/>
    <property type="project" value="UniProtKB-EC"/>
</dbReference>
<dbReference type="CDD" id="cd07036">
    <property type="entry name" value="TPP_PYR_E1-PDHc-beta_like"/>
    <property type="match status" value="1"/>
</dbReference>
<dbReference type="FunFam" id="3.40.50.920:FF:000001">
    <property type="entry name" value="Pyruvate dehydrogenase E1 beta subunit"/>
    <property type="match status" value="1"/>
</dbReference>
<dbReference type="FunFam" id="3.40.50.970:FF:000001">
    <property type="entry name" value="Pyruvate dehydrogenase E1 beta subunit"/>
    <property type="match status" value="1"/>
</dbReference>
<dbReference type="Gene3D" id="3.40.50.920">
    <property type="match status" value="1"/>
</dbReference>
<dbReference type="Gene3D" id="3.40.50.970">
    <property type="match status" value="1"/>
</dbReference>
<dbReference type="InterPro" id="IPR029061">
    <property type="entry name" value="THDP-binding"/>
</dbReference>
<dbReference type="InterPro" id="IPR009014">
    <property type="entry name" value="Transketo_C/PFOR_II"/>
</dbReference>
<dbReference type="InterPro" id="IPR005475">
    <property type="entry name" value="Transketolase-like_Pyr-bd"/>
</dbReference>
<dbReference type="InterPro" id="IPR033248">
    <property type="entry name" value="Transketolase_C"/>
</dbReference>
<dbReference type="PANTHER" id="PTHR43257">
    <property type="entry name" value="PYRUVATE DEHYDROGENASE E1 COMPONENT BETA SUBUNIT"/>
    <property type="match status" value="1"/>
</dbReference>
<dbReference type="PANTHER" id="PTHR43257:SF2">
    <property type="entry name" value="PYRUVATE DEHYDROGENASE E1 COMPONENT SUBUNIT BETA"/>
    <property type="match status" value="1"/>
</dbReference>
<dbReference type="Pfam" id="PF02779">
    <property type="entry name" value="Transket_pyr"/>
    <property type="match status" value="1"/>
</dbReference>
<dbReference type="Pfam" id="PF02780">
    <property type="entry name" value="Transketolase_C"/>
    <property type="match status" value="1"/>
</dbReference>
<dbReference type="SMART" id="SM00861">
    <property type="entry name" value="Transket_pyr"/>
    <property type="match status" value="1"/>
</dbReference>
<dbReference type="SUPFAM" id="SSF52518">
    <property type="entry name" value="Thiamin diphosphate-binding fold (THDP-binding)"/>
    <property type="match status" value="1"/>
</dbReference>
<dbReference type="SUPFAM" id="SSF52922">
    <property type="entry name" value="TK C-terminal domain-like"/>
    <property type="match status" value="1"/>
</dbReference>
<proteinExistence type="inferred from homology"/>
<organism>
    <name type="scientific">Staphylococcus aureus (strain MRSA252)</name>
    <dbReference type="NCBI Taxonomy" id="282458"/>
    <lineage>
        <taxon>Bacteria</taxon>
        <taxon>Bacillati</taxon>
        <taxon>Bacillota</taxon>
        <taxon>Bacilli</taxon>
        <taxon>Bacillales</taxon>
        <taxon>Staphylococcaceae</taxon>
        <taxon>Staphylococcus</taxon>
    </lineage>
</organism>
<name>ODPB_STAAR</name>
<sequence>MAQMTMVQAINDALKTELKNDQDVLIFGEDVGVNGGVFRVTEGLQKEFGEDRVFDTPLAESGIGGLAMGLAVEGFRPVMEVQFLGFVFEVFDAIAGQIARTRFRSGGTKTAPVTIRSPFGGGVHTPELHADNLEGILAQSPGLKVVIPSGPYDAKGLLISSIRSNDPVVYLEHMKLYRSFREEVPEEEYTIDIGKANVKKEGNDISIITYGAMVQESMKAAEELEKDGYSVEVIDLRTVQPIDVDTIVASVEKTGRAVVVQEAQRQAGVGAAVVAELSERAILSLEAPIGRVAAADTIYPFTQAENVWLPNKNDIIEKAKETLEF</sequence>
<feature type="chain" id="PRO_0000162231" description="Pyruvate dehydrogenase E1 component subunit beta">
    <location>
        <begin position="1"/>
        <end position="325"/>
    </location>
</feature>
<feature type="binding site" evidence="1">
    <location>
        <position position="60"/>
    </location>
    <ligand>
        <name>thiamine diphosphate</name>
        <dbReference type="ChEBI" id="CHEBI:58937"/>
    </ligand>
</feature>
<evidence type="ECO:0000250" key="1"/>
<reference key="1">
    <citation type="journal article" date="2004" name="Proc. Natl. Acad. Sci. U.S.A.">
        <title>Complete genomes of two clinical Staphylococcus aureus strains: evidence for the rapid evolution of virulence and drug resistance.</title>
        <authorList>
            <person name="Holden M.T.G."/>
            <person name="Feil E.J."/>
            <person name="Lindsay J.A."/>
            <person name="Peacock S.J."/>
            <person name="Day N.P.J."/>
            <person name="Enright M.C."/>
            <person name="Foster T.J."/>
            <person name="Moore C.E."/>
            <person name="Hurst L."/>
            <person name="Atkin R."/>
            <person name="Barron A."/>
            <person name="Bason N."/>
            <person name="Bentley S.D."/>
            <person name="Chillingworth C."/>
            <person name="Chillingworth T."/>
            <person name="Churcher C."/>
            <person name="Clark L."/>
            <person name="Corton C."/>
            <person name="Cronin A."/>
            <person name="Doggett J."/>
            <person name="Dowd L."/>
            <person name="Feltwell T."/>
            <person name="Hance Z."/>
            <person name="Harris B."/>
            <person name="Hauser H."/>
            <person name="Holroyd S."/>
            <person name="Jagels K."/>
            <person name="James K.D."/>
            <person name="Lennard N."/>
            <person name="Line A."/>
            <person name="Mayes R."/>
            <person name="Moule S."/>
            <person name="Mungall K."/>
            <person name="Ormond D."/>
            <person name="Quail M.A."/>
            <person name="Rabbinowitsch E."/>
            <person name="Rutherford K.M."/>
            <person name="Sanders M."/>
            <person name="Sharp S."/>
            <person name="Simmonds M."/>
            <person name="Stevens K."/>
            <person name="Whitehead S."/>
            <person name="Barrell B.G."/>
            <person name="Spratt B.G."/>
            <person name="Parkhill J."/>
        </authorList>
    </citation>
    <scope>NUCLEOTIDE SEQUENCE [LARGE SCALE GENOMIC DNA]</scope>
    <source>
        <strain>MRSA252</strain>
    </source>
</reference>
<protein>
    <recommendedName>
        <fullName>Pyruvate dehydrogenase E1 component subunit beta</fullName>
        <ecNumber>1.2.4.1</ecNumber>
    </recommendedName>
</protein>